<name>FBID_GEOOG</name>
<evidence type="ECO:0000255" key="1">
    <source>
        <dbReference type="HAMAP-Rule" id="MF_02114"/>
    </source>
</evidence>
<dbReference type="EC" id="2.7.7.105" evidence="1"/>
<dbReference type="EMBL" id="CP001867">
    <property type="protein sequence ID" value="ADB76614.1"/>
    <property type="molecule type" value="Genomic_DNA"/>
</dbReference>
<dbReference type="RefSeq" id="WP_012950039.1">
    <property type="nucleotide sequence ID" value="NC_013757.1"/>
</dbReference>
<dbReference type="SMR" id="D2SEH8"/>
<dbReference type="STRING" id="526225.Gobs_4049"/>
<dbReference type="KEGG" id="gob:Gobs_4049"/>
<dbReference type="eggNOG" id="COG1920">
    <property type="taxonomic scope" value="Bacteria"/>
</dbReference>
<dbReference type="HOGENOM" id="CLU_076569_0_0_11"/>
<dbReference type="OrthoDB" id="9151145at2"/>
<dbReference type="UniPathway" id="UPA00071"/>
<dbReference type="Proteomes" id="UP000001382">
    <property type="component" value="Chromosome"/>
</dbReference>
<dbReference type="GO" id="GO:0005525">
    <property type="term" value="F:GTP binding"/>
    <property type="evidence" value="ECO:0007669"/>
    <property type="project" value="UniProtKB-KW"/>
</dbReference>
<dbReference type="GO" id="GO:0043814">
    <property type="term" value="F:phospholactate guanylyltransferase activity"/>
    <property type="evidence" value="ECO:0007669"/>
    <property type="project" value="InterPro"/>
</dbReference>
<dbReference type="GO" id="GO:0052645">
    <property type="term" value="P:F420-0 metabolic process"/>
    <property type="evidence" value="ECO:0007669"/>
    <property type="project" value="UniProtKB-UniRule"/>
</dbReference>
<dbReference type="Gene3D" id="3.90.550.10">
    <property type="entry name" value="Spore Coat Polysaccharide Biosynthesis Protein SpsA, Chain A"/>
    <property type="match status" value="1"/>
</dbReference>
<dbReference type="HAMAP" id="MF_02114">
    <property type="entry name" value="CofC"/>
    <property type="match status" value="1"/>
</dbReference>
<dbReference type="InterPro" id="IPR002835">
    <property type="entry name" value="CofC"/>
</dbReference>
<dbReference type="InterPro" id="IPR025877">
    <property type="entry name" value="MobA-like_NTP_Trfase"/>
</dbReference>
<dbReference type="InterPro" id="IPR029044">
    <property type="entry name" value="Nucleotide-diphossugar_trans"/>
</dbReference>
<dbReference type="NCBIfam" id="TIGR03552">
    <property type="entry name" value="F420_cofC"/>
    <property type="match status" value="1"/>
</dbReference>
<dbReference type="PANTHER" id="PTHR40392">
    <property type="entry name" value="2-PHOSPHO-L-LACTATE GUANYLYLTRANSFERASE"/>
    <property type="match status" value="1"/>
</dbReference>
<dbReference type="PANTHER" id="PTHR40392:SF1">
    <property type="entry name" value="2-PHOSPHO-L-LACTATE GUANYLYLTRANSFERASE"/>
    <property type="match status" value="1"/>
</dbReference>
<dbReference type="Pfam" id="PF12804">
    <property type="entry name" value="NTP_transf_3"/>
    <property type="match status" value="1"/>
</dbReference>
<dbReference type="SUPFAM" id="SSF53448">
    <property type="entry name" value="Nucleotide-diphospho-sugar transferases"/>
    <property type="match status" value="1"/>
</dbReference>
<feature type="chain" id="PRO_0000398685" description="Phosphoenolpyruvate guanylyltransferase">
    <location>
        <begin position="1"/>
        <end position="215"/>
    </location>
</feature>
<feature type="binding site" evidence="1">
    <location>
        <position position="144"/>
    </location>
    <ligand>
        <name>phosphoenolpyruvate</name>
        <dbReference type="ChEBI" id="CHEBI:58702"/>
    </ligand>
</feature>
<feature type="binding site" evidence="1">
    <location>
        <position position="159"/>
    </location>
    <ligand>
        <name>phosphoenolpyruvate</name>
        <dbReference type="ChEBI" id="CHEBI:58702"/>
    </ligand>
</feature>
<feature type="binding site" evidence="1">
    <location>
        <position position="162"/>
    </location>
    <ligand>
        <name>phosphoenolpyruvate</name>
        <dbReference type="ChEBI" id="CHEBI:58702"/>
    </ligand>
</feature>
<sequence length="215" mass="21256">MVAVRAWSVVVPAKRLPLAKTRLRPLPEGLDGPPDAHDRLVLALLADTVAAALSSPAVTGVLVVTDDPAAAAEVTRLGARTVPDEPGRGLNPALEHGARATGGRAVAALSSDLPALRPEELTAALAAAEAAPRCFVPDAQGTGTTLLTAAGTDLSPAFGTGSAQRHAAGGAVALTGAWPGLERDVDTPGDLRGALALGVGPHTAALLGGAARPTG</sequence>
<comment type="function">
    <text evidence="1">Guanylyltransferase that catalyzes the activation of phosphoenolpyruvate (PEP) as enolpyruvoyl-2-diphospho-5'-guanosine, via the condensation of PEP with GTP. It is involved in the biosynthesis of coenzyme F420, a hydride carrier cofactor.</text>
</comment>
<comment type="catalytic activity">
    <reaction evidence="1">
        <text>phosphoenolpyruvate + GTP + H(+) = enolpyruvoyl-2-diphospho-5'-guanosine + diphosphate</text>
        <dbReference type="Rhea" id="RHEA:30519"/>
        <dbReference type="ChEBI" id="CHEBI:15378"/>
        <dbReference type="ChEBI" id="CHEBI:33019"/>
        <dbReference type="ChEBI" id="CHEBI:37565"/>
        <dbReference type="ChEBI" id="CHEBI:58702"/>
        <dbReference type="ChEBI" id="CHEBI:143701"/>
        <dbReference type="EC" id="2.7.7.105"/>
    </reaction>
</comment>
<comment type="pathway">
    <text evidence="1">Cofactor biosynthesis; coenzyme F420 biosynthesis.</text>
</comment>
<comment type="similarity">
    <text evidence="1">Belongs to the CofC family.</text>
</comment>
<organism>
    <name type="scientific">Geodermatophilus obscurus (strain ATCC 25078 / DSM 43160 / JCM 3152 / CCUG 61914 / KCC A-0152 / KCTC 9177 / NBRC 13315 / NRRL B-3577 / G-20)</name>
    <dbReference type="NCBI Taxonomy" id="526225"/>
    <lineage>
        <taxon>Bacteria</taxon>
        <taxon>Bacillati</taxon>
        <taxon>Actinomycetota</taxon>
        <taxon>Actinomycetes</taxon>
        <taxon>Geodermatophilales</taxon>
        <taxon>Geodermatophilaceae</taxon>
        <taxon>Geodermatophilus</taxon>
    </lineage>
</organism>
<reference key="1">
    <citation type="submission" date="2010-01" db="EMBL/GenBank/DDBJ databases">
        <title>The complete genome of Geodermatophilus obscurus DSM 43160.</title>
        <authorList>
            <consortium name="US DOE Joint Genome Institute (JGI-PGF)"/>
            <person name="Lucas S."/>
            <person name="Copeland A."/>
            <person name="Lapidus A."/>
            <person name="Glavina del Rio T."/>
            <person name="Dalin E."/>
            <person name="Tice H."/>
            <person name="Bruce D."/>
            <person name="Goodwin L."/>
            <person name="Pitluck S."/>
            <person name="Kyrpides N."/>
            <person name="Mavromatis K."/>
            <person name="Ivanova N."/>
            <person name="Munk A.C."/>
            <person name="Brettin T."/>
            <person name="Detter J.C."/>
            <person name="Han C."/>
            <person name="Larimer F."/>
            <person name="Land M."/>
            <person name="Hauser L."/>
            <person name="Markowitz V."/>
            <person name="Cheng J.-F."/>
            <person name="Hugenholtz P."/>
            <person name="Woyke T."/>
            <person name="Wu D."/>
            <person name="Jando M."/>
            <person name="Schneider S."/>
            <person name="Klenk H.-P."/>
            <person name="Eisen J.A."/>
        </authorList>
    </citation>
    <scope>NUCLEOTIDE SEQUENCE [LARGE SCALE GENOMIC DNA]</scope>
    <source>
        <strain>ATCC 25078 / DSM 43160 / JCM 3152 / CCUG 61914 / KCC A-0152 / KCTC 9177 / NBRC 13315 / NRRL B-3577 / G-20</strain>
    </source>
</reference>
<gene>
    <name evidence="1" type="primary">fbiD</name>
    <name type="ordered locus">Gobs_4049</name>
</gene>
<accession>D2SEH8</accession>
<protein>
    <recommendedName>
        <fullName evidence="1">Phosphoenolpyruvate guanylyltransferase</fullName>
        <shortName evidence="1">PEP guanylyltransferase</shortName>
        <ecNumber evidence="1">2.7.7.105</ecNumber>
    </recommendedName>
</protein>
<keyword id="KW-0342">GTP-binding</keyword>
<keyword id="KW-0547">Nucleotide-binding</keyword>
<keyword id="KW-0548">Nucleotidyltransferase</keyword>
<keyword id="KW-1185">Reference proteome</keyword>
<keyword id="KW-0808">Transferase</keyword>
<proteinExistence type="inferred from homology"/>